<feature type="chain" id="PRO_1000060863" description="Small ribosomal subunit protein uS10">
    <location>
        <begin position="1"/>
        <end position="103"/>
    </location>
</feature>
<proteinExistence type="inferred from homology"/>
<gene>
    <name evidence="1" type="primary">rpsJ</name>
    <name type="ordered locus">Sfum_1554</name>
</gene>
<accession>A0LII9</accession>
<organism>
    <name type="scientific">Syntrophobacter fumaroxidans (strain DSM 10017 / MPOB)</name>
    <dbReference type="NCBI Taxonomy" id="335543"/>
    <lineage>
        <taxon>Bacteria</taxon>
        <taxon>Pseudomonadati</taxon>
        <taxon>Thermodesulfobacteriota</taxon>
        <taxon>Syntrophobacteria</taxon>
        <taxon>Syntrophobacterales</taxon>
        <taxon>Syntrophobacteraceae</taxon>
        <taxon>Syntrophobacter</taxon>
    </lineage>
</organism>
<name>RS10_SYNFM</name>
<protein>
    <recommendedName>
        <fullName evidence="1">Small ribosomal subunit protein uS10</fullName>
    </recommendedName>
    <alternativeName>
        <fullName evidence="2">30S ribosomal protein S10</fullName>
    </alternativeName>
</protein>
<sequence length="103" mass="11858">MMTNQRIRIRLKAYDHKLLDQSTSEIVMTAKKTGARVAGPIPLPTKIHRYTVLRSPHVDKKSREQFEIRVHKRLIDILEPTQQTVDSLMKLDLSAGVDVEIKL</sequence>
<comment type="function">
    <text evidence="1">Involved in the binding of tRNA to the ribosomes.</text>
</comment>
<comment type="subunit">
    <text evidence="1">Part of the 30S ribosomal subunit.</text>
</comment>
<comment type="similarity">
    <text evidence="1">Belongs to the universal ribosomal protein uS10 family.</text>
</comment>
<evidence type="ECO:0000255" key="1">
    <source>
        <dbReference type="HAMAP-Rule" id="MF_00508"/>
    </source>
</evidence>
<evidence type="ECO:0000305" key="2"/>
<reference key="1">
    <citation type="submission" date="2006-10" db="EMBL/GenBank/DDBJ databases">
        <title>Complete sequence of Syntrophobacter fumaroxidans MPOB.</title>
        <authorList>
            <consortium name="US DOE Joint Genome Institute"/>
            <person name="Copeland A."/>
            <person name="Lucas S."/>
            <person name="Lapidus A."/>
            <person name="Barry K."/>
            <person name="Detter J.C."/>
            <person name="Glavina del Rio T."/>
            <person name="Hammon N."/>
            <person name="Israni S."/>
            <person name="Pitluck S."/>
            <person name="Goltsman E.G."/>
            <person name="Martinez M."/>
            <person name="Schmutz J."/>
            <person name="Larimer F."/>
            <person name="Land M."/>
            <person name="Hauser L."/>
            <person name="Kyrpides N."/>
            <person name="Kim E."/>
            <person name="Boone D.R."/>
            <person name="Brockman F."/>
            <person name="Culley D."/>
            <person name="Ferry J."/>
            <person name="Gunsalus R."/>
            <person name="McInerney M.J."/>
            <person name="Morrison M."/>
            <person name="Plugge C."/>
            <person name="Rohlin L."/>
            <person name="Scholten J."/>
            <person name="Sieber J."/>
            <person name="Stams A.J.M."/>
            <person name="Worm P."/>
            <person name="Henstra A.M."/>
            <person name="Richardson P."/>
        </authorList>
    </citation>
    <scope>NUCLEOTIDE SEQUENCE [LARGE SCALE GENOMIC DNA]</scope>
    <source>
        <strain>DSM 10017 / MPOB</strain>
    </source>
</reference>
<keyword id="KW-1185">Reference proteome</keyword>
<keyword id="KW-0687">Ribonucleoprotein</keyword>
<keyword id="KW-0689">Ribosomal protein</keyword>
<dbReference type="EMBL" id="CP000478">
    <property type="protein sequence ID" value="ABK17241.1"/>
    <property type="molecule type" value="Genomic_DNA"/>
</dbReference>
<dbReference type="SMR" id="A0LII9"/>
<dbReference type="FunCoup" id="A0LII9">
    <property type="interactions" value="647"/>
</dbReference>
<dbReference type="STRING" id="335543.Sfum_1554"/>
<dbReference type="KEGG" id="sfu:Sfum_1554"/>
<dbReference type="eggNOG" id="COG0051">
    <property type="taxonomic scope" value="Bacteria"/>
</dbReference>
<dbReference type="HOGENOM" id="CLU_122625_1_3_7"/>
<dbReference type="InParanoid" id="A0LII9"/>
<dbReference type="Proteomes" id="UP000001784">
    <property type="component" value="Chromosome"/>
</dbReference>
<dbReference type="GO" id="GO:1990904">
    <property type="term" value="C:ribonucleoprotein complex"/>
    <property type="evidence" value="ECO:0007669"/>
    <property type="project" value="UniProtKB-KW"/>
</dbReference>
<dbReference type="GO" id="GO:0005840">
    <property type="term" value="C:ribosome"/>
    <property type="evidence" value="ECO:0007669"/>
    <property type="project" value="UniProtKB-KW"/>
</dbReference>
<dbReference type="GO" id="GO:0003735">
    <property type="term" value="F:structural constituent of ribosome"/>
    <property type="evidence" value="ECO:0007669"/>
    <property type="project" value="InterPro"/>
</dbReference>
<dbReference type="GO" id="GO:0000049">
    <property type="term" value="F:tRNA binding"/>
    <property type="evidence" value="ECO:0007669"/>
    <property type="project" value="UniProtKB-UniRule"/>
</dbReference>
<dbReference type="GO" id="GO:0006412">
    <property type="term" value="P:translation"/>
    <property type="evidence" value="ECO:0007669"/>
    <property type="project" value="UniProtKB-UniRule"/>
</dbReference>
<dbReference type="FunFam" id="3.30.70.600:FF:000001">
    <property type="entry name" value="30S ribosomal protein S10"/>
    <property type="match status" value="1"/>
</dbReference>
<dbReference type="Gene3D" id="3.30.70.600">
    <property type="entry name" value="Ribosomal protein S10 domain"/>
    <property type="match status" value="1"/>
</dbReference>
<dbReference type="HAMAP" id="MF_00508">
    <property type="entry name" value="Ribosomal_uS10"/>
    <property type="match status" value="1"/>
</dbReference>
<dbReference type="InterPro" id="IPR001848">
    <property type="entry name" value="Ribosomal_uS10"/>
</dbReference>
<dbReference type="InterPro" id="IPR018268">
    <property type="entry name" value="Ribosomal_uS10_CS"/>
</dbReference>
<dbReference type="InterPro" id="IPR027486">
    <property type="entry name" value="Ribosomal_uS10_dom"/>
</dbReference>
<dbReference type="InterPro" id="IPR036838">
    <property type="entry name" value="Ribosomal_uS10_dom_sf"/>
</dbReference>
<dbReference type="NCBIfam" id="NF001861">
    <property type="entry name" value="PRK00596.1"/>
    <property type="match status" value="1"/>
</dbReference>
<dbReference type="NCBIfam" id="TIGR01049">
    <property type="entry name" value="rpsJ_bact"/>
    <property type="match status" value="1"/>
</dbReference>
<dbReference type="PANTHER" id="PTHR11700">
    <property type="entry name" value="30S RIBOSOMAL PROTEIN S10 FAMILY MEMBER"/>
    <property type="match status" value="1"/>
</dbReference>
<dbReference type="Pfam" id="PF00338">
    <property type="entry name" value="Ribosomal_S10"/>
    <property type="match status" value="1"/>
</dbReference>
<dbReference type="PRINTS" id="PR00971">
    <property type="entry name" value="RIBOSOMALS10"/>
</dbReference>
<dbReference type="SMART" id="SM01403">
    <property type="entry name" value="Ribosomal_S10"/>
    <property type="match status" value="1"/>
</dbReference>
<dbReference type="SUPFAM" id="SSF54999">
    <property type="entry name" value="Ribosomal protein S10"/>
    <property type="match status" value="1"/>
</dbReference>
<dbReference type="PROSITE" id="PS00361">
    <property type="entry name" value="RIBOSOMAL_S10"/>
    <property type="match status" value="1"/>
</dbReference>